<sequence length="238" mass="26841">MKNIQTLFQTLNITPQNLTLYKQALTHSSYSNEQNPPQEDNERLEFLGDAIVGLLMADYLYSQSKEDEGIMTKKRAQAVCERSLTIYAHNIELQNYLLLGKGEKNKDFNAKSIIADTFEALFGAIYLDLGYLTAKKVFHNIVLPHLAKTIYIIDFKTQLQEIVQSEKKTIQYKIVQEQGPAHSKNFVAEVYLEKNLLGTGEGSTKKAAEQKAAQQALSKVAKPKDLLNNKGGKEKELQ</sequence>
<keyword id="KW-0963">Cytoplasm</keyword>
<keyword id="KW-0255">Endonuclease</keyword>
<keyword id="KW-0378">Hydrolase</keyword>
<keyword id="KW-0460">Magnesium</keyword>
<keyword id="KW-0479">Metal-binding</keyword>
<keyword id="KW-0507">mRNA processing</keyword>
<keyword id="KW-0540">Nuclease</keyword>
<keyword id="KW-0694">RNA-binding</keyword>
<keyword id="KW-0698">rRNA processing</keyword>
<keyword id="KW-0699">rRNA-binding</keyword>
<keyword id="KW-0819">tRNA processing</keyword>
<proteinExistence type="inferred from homology"/>
<name>RNC_ONYPE</name>
<evidence type="ECO:0000255" key="1">
    <source>
        <dbReference type="HAMAP-Rule" id="MF_00104"/>
    </source>
</evidence>
<evidence type="ECO:0000256" key="2">
    <source>
        <dbReference type="SAM" id="MobiDB-lite"/>
    </source>
</evidence>
<feature type="chain" id="PRO_0000228558" description="Ribonuclease 3">
    <location>
        <begin position="1"/>
        <end position="238"/>
    </location>
</feature>
<feature type="domain" description="RNase III" evidence="1">
    <location>
        <begin position="4"/>
        <end position="130"/>
    </location>
</feature>
<feature type="domain" description="DRBM" evidence="1">
    <location>
        <begin position="154"/>
        <end position="222"/>
    </location>
</feature>
<feature type="region of interest" description="Disordered" evidence="2">
    <location>
        <begin position="215"/>
        <end position="238"/>
    </location>
</feature>
<feature type="compositionally biased region" description="Basic and acidic residues" evidence="2">
    <location>
        <begin position="222"/>
        <end position="238"/>
    </location>
</feature>
<feature type="active site" evidence="1">
    <location>
        <position position="49"/>
    </location>
</feature>
<feature type="active site" evidence="1">
    <location>
        <position position="119"/>
    </location>
</feature>
<feature type="binding site" evidence="1">
    <location>
        <position position="45"/>
    </location>
    <ligand>
        <name>Mg(2+)</name>
        <dbReference type="ChEBI" id="CHEBI:18420"/>
    </ligand>
</feature>
<feature type="binding site" evidence="1">
    <location>
        <position position="116"/>
    </location>
    <ligand>
        <name>Mg(2+)</name>
        <dbReference type="ChEBI" id="CHEBI:18420"/>
    </ligand>
</feature>
<feature type="binding site" evidence="1">
    <location>
        <position position="119"/>
    </location>
    <ligand>
        <name>Mg(2+)</name>
        <dbReference type="ChEBI" id="CHEBI:18420"/>
    </ligand>
</feature>
<organism>
    <name type="scientific">Onion yellows phytoplasma (strain OY-M)</name>
    <dbReference type="NCBI Taxonomy" id="262768"/>
    <lineage>
        <taxon>Bacteria</taxon>
        <taxon>Bacillati</taxon>
        <taxon>Mycoplasmatota</taxon>
        <taxon>Mollicutes</taxon>
        <taxon>Acholeplasmatales</taxon>
        <taxon>Acholeplasmataceae</taxon>
        <taxon>Candidatus Phytoplasma</taxon>
        <taxon>16SrI (Aster yellows group)</taxon>
    </lineage>
</organism>
<dbReference type="EC" id="3.1.26.3" evidence="1"/>
<dbReference type="EMBL" id="AP006628">
    <property type="protein sequence ID" value="BAD04693.1"/>
    <property type="molecule type" value="Genomic_DNA"/>
</dbReference>
<dbReference type="SMR" id="Q6YPW7"/>
<dbReference type="STRING" id="262768.PAM_608"/>
<dbReference type="KEGG" id="poy:PAM_608"/>
<dbReference type="eggNOG" id="COG0571">
    <property type="taxonomic scope" value="Bacteria"/>
</dbReference>
<dbReference type="HOGENOM" id="CLU_000907_1_3_14"/>
<dbReference type="BioCyc" id="OYEL262768:G1G26-734-MONOMER"/>
<dbReference type="Proteomes" id="UP000002523">
    <property type="component" value="Chromosome"/>
</dbReference>
<dbReference type="GO" id="GO:0005737">
    <property type="term" value="C:cytoplasm"/>
    <property type="evidence" value="ECO:0007669"/>
    <property type="project" value="UniProtKB-SubCell"/>
</dbReference>
<dbReference type="GO" id="GO:0003725">
    <property type="term" value="F:double-stranded RNA binding"/>
    <property type="evidence" value="ECO:0007669"/>
    <property type="project" value="TreeGrafter"/>
</dbReference>
<dbReference type="GO" id="GO:0046872">
    <property type="term" value="F:metal ion binding"/>
    <property type="evidence" value="ECO:0007669"/>
    <property type="project" value="UniProtKB-KW"/>
</dbReference>
<dbReference type="GO" id="GO:0004525">
    <property type="term" value="F:ribonuclease III activity"/>
    <property type="evidence" value="ECO:0007669"/>
    <property type="project" value="UniProtKB-UniRule"/>
</dbReference>
<dbReference type="GO" id="GO:0019843">
    <property type="term" value="F:rRNA binding"/>
    <property type="evidence" value="ECO:0007669"/>
    <property type="project" value="UniProtKB-KW"/>
</dbReference>
<dbReference type="GO" id="GO:0006397">
    <property type="term" value="P:mRNA processing"/>
    <property type="evidence" value="ECO:0007669"/>
    <property type="project" value="UniProtKB-UniRule"/>
</dbReference>
<dbReference type="GO" id="GO:0010468">
    <property type="term" value="P:regulation of gene expression"/>
    <property type="evidence" value="ECO:0007669"/>
    <property type="project" value="TreeGrafter"/>
</dbReference>
<dbReference type="GO" id="GO:0006364">
    <property type="term" value="P:rRNA processing"/>
    <property type="evidence" value="ECO:0007669"/>
    <property type="project" value="UniProtKB-UniRule"/>
</dbReference>
<dbReference type="GO" id="GO:0008033">
    <property type="term" value="P:tRNA processing"/>
    <property type="evidence" value="ECO:0007669"/>
    <property type="project" value="UniProtKB-KW"/>
</dbReference>
<dbReference type="CDD" id="cd10845">
    <property type="entry name" value="DSRM_RNAse_III_family"/>
    <property type="match status" value="1"/>
</dbReference>
<dbReference type="CDD" id="cd00593">
    <property type="entry name" value="RIBOc"/>
    <property type="match status" value="1"/>
</dbReference>
<dbReference type="FunFam" id="1.10.1520.10:FF:000001">
    <property type="entry name" value="Ribonuclease 3"/>
    <property type="match status" value="1"/>
</dbReference>
<dbReference type="FunFam" id="3.30.160.20:FF:000003">
    <property type="entry name" value="Ribonuclease 3"/>
    <property type="match status" value="1"/>
</dbReference>
<dbReference type="Gene3D" id="3.30.160.20">
    <property type="match status" value="1"/>
</dbReference>
<dbReference type="Gene3D" id="1.10.1520.10">
    <property type="entry name" value="Ribonuclease III domain"/>
    <property type="match status" value="1"/>
</dbReference>
<dbReference type="HAMAP" id="MF_00104">
    <property type="entry name" value="RNase_III"/>
    <property type="match status" value="1"/>
</dbReference>
<dbReference type="InterPro" id="IPR014720">
    <property type="entry name" value="dsRBD_dom"/>
</dbReference>
<dbReference type="InterPro" id="IPR011907">
    <property type="entry name" value="RNase_III"/>
</dbReference>
<dbReference type="InterPro" id="IPR000999">
    <property type="entry name" value="RNase_III_dom"/>
</dbReference>
<dbReference type="InterPro" id="IPR036389">
    <property type="entry name" value="RNase_III_sf"/>
</dbReference>
<dbReference type="NCBIfam" id="TIGR02191">
    <property type="entry name" value="RNaseIII"/>
    <property type="match status" value="1"/>
</dbReference>
<dbReference type="PANTHER" id="PTHR11207:SF0">
    <property type="entry name" value="RIBONUCLEASE 3"/>
    <property type="match status" value="1"/>
</dbReference>
<dbReference type="PANTHER" id="PTHR11207">
    <property type="entry name" value="RIBONUCLEASE III"/>
    <property type="match status" value="1"/>
</dbReference>
<dbReference type="Pfam" id="PF00035">
    <property type="entry name" value="dsrm"/>
    <property type="match status" value="1"/>
</dbReference>
<dbReference type="Pfam" id="PF14622">
    <property type="entry name" value="Ribonucleas_3_3"/>
    <property type="match status" value="1"/>
</dbReference>
<dbReference type="SMART" id="SM00358">
    <property type="entry name" value="DSRM"/>
    <property type="match status" value="1"/>
</dbReference>
<dbReference type="SMART" id="SM00535">
    <property type="entry name" value="RIBOc"/>
    <property type="match status" value="1"/>
</dbReference>
<dbReference type="SUPFAM" id="SSF54768">
    <property type="entry name" value="dsRNA-binding domain-like"/>
    <property type="match status" value="1"/>
</dbReference>
<dbReference type="SUPFAM" id="SSF69065">
    <property type="entry name" value="RNase III domain-like"/>
    <property type="match status" value="1"/>
</dbReference>
<dbReference type="PROSITE" id="PS50137">
    <property type="entry name" value="DS_RBD"/>
    <property type="match status" value="1"/>
</dbReference>
<dbReference type="PROSITE" id="PS00517">
    <property type="entry name" value="RNASE_3_1"/>
    <property type="match status" value="1"/>
</dbReference>
<dbReference type="PROSITE" id="PS50142">
    <property type="entry name" value="RNASE_3_2"/>
    <property type="match status" value="1"/>
</dbReference>
<accession>Q6YPW7</accession>
<protein>
    <recommendedName>
        <fullName evidence="1">Ribonuclease 3</fullName>
        <ecNumber evidence="1">3.1.26.3</ecNumber>
    </recommendedName>
    <alternativeName>
        <fullName evidence="1">Ribonuclease III</fullName>
        <shortName evidence="1">RNase III</shortName>
    </alternativeName>
</protein>
<gene>
    <name evidence="1" type="primary">rnc</name>
    <name type="ordered locus">PAM_608</name>
</gene>
<reference key="1">
    <citation type="journal article" date="2004" name="Nat. Genet.">
        <title>Reductive evolution suggested from the complete genome sequence of a plant-pathogenic phytoplasma.</title>
        <authorList>
            <person name="Oshima K."/>
            <person name="Kakizawa S."/>
            <person name="Nishigawa H."/>
            <person name="Jung H.-Y."/>
            <person name="Wei W."/>
            <person name="Suzuki S."/>
            <person name="Arashida R."/>
            <person name="Nakata D."/>
            <person name="Miyata S."/>
            <person name="Ugaki M."/>
            <person name="Namba S."/>
        </authorList>
    </citation>
    <scope>NUCLEOTIDE SEQUENCE [LARGE SCALE GENOMIC DNA]</scope>
    <source>
        <strain>OY-M</strain>
    </source>
</reference>
<comment type="function">
    <text evidence="1">Digests double-stranded RNA. Involved in the processing of primary rRNA transcript to yield the immediate precursors to the large and small rRNAs (23S and 16S). Processes some mRNAs, and tRNAs when they are encoded in the rRNA operon. Processes pre-crRNA and tracrRNA of type II CRISPR loci if present in the organism.</text>
</comment>
<comment type="catalytic activity">
    <reaction evidence="1">
        <text>Endonucleolytic cleavage to 5'-phosphomonoester.</text>
        <dbReference type="EC" id="3.1.26.3"/>
    </reaction>
</comment>
<comment type="cofactor">
    <cofactor evidence="1">
        <name>Mg(2+)</name>
        <dbReference type="ChEBI" id="CHEBI:18420"/>
    </cofactor>
</comment>
<comment type="subunit">
    <text evidence="1">Homodimer.</text>
</comment>
<comment type="subcellular location">
    <subcellularLocation>
        <location evidence="1">Cytoplasm</location>
    </subcellularLocation>
</comment>
<comment type="similarity">
    <text evidence="1">Belongs to the ribonuclease III family.</text>
</comment>